<sequence>MATVFRPLERLRVPRPSLHPGVTGSGSACCRCTLGAKRYLLTDNIVKLKEFQHKKIAIAYNLPGTKEIYFRNLEEKLTQNKLILKEELKTLLYLCQSLEDVQLAKAVIYRYHAENKNFTLGEYKFGPVFMRLCYELDLEDSAVELVRDKHLQGFFLDSTSFNILMDMLFTKGKYERALQVLIEMKNQDVRFSKETYILAFAICYKLNTLESLKICTTLREEALIKGDIICRRAYCFVVALALNKNQLKNAVSIFSQIVNPESIVCINLNILIHIQSNMLESLLKILEDSLDTNLSKFVRRHTFSEEVLAKVREKLKDSPALIARFDEVYGKLHVNGQITVHSLDALLCHVPRDKRSNLLLLKKRAVSHRTLQPLSRSLLTE</sequence>
<keyword id="KW-0496">Mitochondrion</keyword>
<keyword id="KW-0507">mRNA processing</keyword>
<keyword id="KW-0597">Phosphoprotein</keyword>
<keyword id="KW-1185">Reference proteome</keyword>
<accession>Q8R3K3</accession>
<accession>Q91VG3</accession>
<accession>Q9D0S7</accession>
<feature type="chain" id="PRO_0000344051" description="Pentatricopeptide repeat-containing protein 2, mitochondrial">
    <location>
        <begin position="1"/>
        <end position="381"/>
    </location>
</feature>
<feature type="repeat" description="PPR">
    <location>
        <begin position="159"/>
        <end position="193"/>
    </location>
</feature>
<feature type="modified residue" description="Phosphoserine" evidence="1">
    <location>
        <position position="375"/>
    </location>
</feature>
<evidence type="ECO:0000250" key="1">
    <source>
        <dbReference type="UniProtKB" id="Q8WV60"/>
    </source>
</evidence>
<evidence type="ECO:0000269" key="2">
    <source>
    </source>
</evidence>
<evidence type="ECO:0000305" key="3"/>
<proteinExistence type="evidence at protein level"/>
<name>PTCD2_MOUSE</name>
<organism>
    <name type="scientific">Mus musculus</name>
    <name type="common">Mouse</name>
    <dbReference type="NCBI Taxonomy" id="10090"/>
    <lineage>
        <taxon>Eukaryota</taxon>
        <taxon>Metazoa</taxon>
        <taxon>Chordata</taxon>
        <taxon>Craniata</taxon>
        <taxon>Vertebrata</taxon>
        <taxon>Euteleostomi</taxon>
        <taxon>Mammalia</taxon>
        <taxon>Eutheria</taxon>
        <taxon>Euarchontoglires</taxon>
        <taxon>Glires</taxon>
        <taxon>Rodentia</taxon>
        <taxon>Myomorpha</taxon>
        <taxon>Muroidea</taxon>
        <taxon>Muridae</taxon>
        <taxon>Murinae</taxon>
        <taxon>Mus</taxon>
        <taxon>Mus</taxon>
    </lineage>
</organism>
<comment type="function">
    <text evidence="2">Involved in mitochondrial RNA maturation and mitochondrial respiratory chain function.</text>
</comment>
<comment type="subcellular location">
    <subcellularLocation>
        <location evidence="2">Mitochondrion</location>
    </subcellularLocation>
</comment>
<comment type="tissue specificity">
    <text evidence="2">High expression in heart and liver and low expression in kidney, brain and testis.</text>
</comment>
<comment type="disruption phenotype">
    <text evidence="2">Deficient mice shown deficiency of the third complex of the respiratory chain that caused profound ultrastructural changes in the heart. The outer layers of ventricular cardiomyocytes appeared to be infiltrated with macrovesicular fat deposits, having the appearance of adipocytes.</text>
</comment>
<comment type="similarity">
    <text evidence="3">Belongs to the PTCD2 family.</text>
</comment>
<comment type="sequence caution" evidence="3">
    <conflict type="miscellaneous discrepancy">
        <sequence resource="EMBL-CDS" id="AAH16563"/>
    </conflict>
    <text>Contaminating sequence. Potential vector sequence.</text>
</comment>
<comment type="sequence caution" evidence="3">
    <conflict type="frameshift">
        <sequence resource="EMBL-CDS" id="BAB23336"/>
    </conflict>
</comment>
<dbReference type="EMBL" id="AK004502">
    <property type="protein sequence ID" value="BAB23336.1"/>
    <property type="status" value="ALT_FRAME"/>
    <property type="molecule type" value="mRNA"/>
</dbReference>
<dbReference type="EMBL" id="BC016563">
    <property type="protein sequence ID" value="AAH16563.1"/>
    <property type="status" value="ALT_SEQ"/>
    <property type="molecule type" value="mRNA"/>
</dbReference>
<dbReference type="EMBL" id="BC025110">
    <property type="protein sequence ID" value="AAH25110.1"/>
    <property type="molecule type" value="mRNA"/>
</dbReference>
<dbReference type="CCDS" id="CCDS26721.1"/>
<dbReference type="RefSeq" id="NP_081149.1">
    <property type="nucleotide sequence ID" value="NM_026873.2"/>
</dbReference>
<dbReference type="SMR" id="Q8R3K3"/>
<dbReference type="BioGRID" id="213122">
    <property type="interactions" value="3"/>
</dbReference>
<dbReference type="FunCoup" id="Q8R3K3">
    <property type="interactions" value="2289"/>
</dbReference>
<dbReference type="STRING" id="10090.ENSMUSP00000022153"/>
<dbReference type="iPTMnet" id="Q8R3K3"/>
<dbReference type="PhosphoSitePlus" id="Q8R3K3"/>
<dbReference type="PaxDb" id="10090-ENSMUSP00000022153"/>
<dbReference type="PeptideAtlas" id="Q8R3K3"/>
<dbReference type="ProteomicsDB" id="302004"/>
<dbReference type="Pumba" id="Q8R3K3"/>
<dbReference type="Antibodypedia" id="48592">
    <property type="antibodies" value="178 antibodies from 21 providers"/>
</dbReference>
<dbReference type="Ensembl" id="ENSMUST00000022153.8">
    <property type="protein sequence ID" value="ENSMUSP00000022153.7"/>
    <property type="gene ID" value="ENSMUSG00000021650.8"/>
</dbReference>
<dbReference type="GeneID" id="68927"/>
<dbReference type="KEGG" id="mmu:68927"/>
<dbReference type="UCSC" id="uc007rpm.1">
    <property type="organism name" value="mouse"/>
</dbReference>
<dbReference type="AGR" id="MGI:1916177"/>
<dbReference type="CTD" id="79810"/>
<dbReference type="MGI" id="MGI:1916177">
    <property type="gene designation" value="Ptcd2"/>
</dbReference>
<dbReference type="VEuPathDB" id="HostDB:ENSMUSG00000021650"/>
<dbReference type="eggNOG" id="ENOG502R1K6">
    <property type="taxonomic scope" value="Eukaryota"/>
</dbReference>
<dbReference type="GeneTree" id="ENSGT00390000009329"/>
<dbReference type="HOGENOM" id="CLU_060975_0_0_1"/>
<dbReference type="InParanoid" id="Q8R3K3"/>
<dbReference type="OMA" id="KFYCSQI"/>
<dbReference type="OrthoDB" id="6073372at2759"/>
<dbReference type="PhylomeDB" id="Q8R3K3"/>
<dbReference type="TreeFam" id="TF324851"/>
<dbReference type="BioGRID-ORCS" id="68927">
    <property type="hits" value="6 hits in 77 CRISPR screens"/>
</dbReference>
<dbReference type="PRO" id="PR:Q8R3K3"/>
<dbReference type="Proteomes" id="UP000000589">
    <property type="component" value="Chromosome 13"/>
</dbReference>
<dbReference type="RNAct" id="Q8R3K3">
    <property type="molecule type" value="protein"/>
</dbReference>
<dbReference type="Bgee" id="ENSMUSG00000021650">
    <property type="expression patterns" value="Expressed in otic placode and 264 other cell types or tissues"/>
</dbReference>
<dbReference type="GO" id="GO:0005739">
    <property type="term" value="C:mitochondrion"/>
    <property type="evidence" value="ECO:0007005"/>
    <property type="project" value="MGI"/>
</dbReference>
<dbReference type="GO" id="GO:0007507">
    <property type="term" value="P:heart development"/>
    <property type="evidence" value="ECO:0000315"/>
    <property type="project" value="MGI"/>
</dbReference>
<dbReference type="GO" id="GO:0001822">
    <property type="term" value="P:kidney development"/>
    <property type="evidence" value="ECO:0000315"/>
    <property type="project" value="MGI"/>
</dbReference>
<dbReference type="GO" id="GO:0001889">
    <property type="term" value="P:liver development"/>
    <property type="evidence" value="ECO:0000315"/>
    <property type="project" value="MGI"/>
</dbReference>
<dbReference type="GO" id="GO:0007005">
    <property type="term" value="P:mitochondrion organization"/>
    <property type="evidence" value="ECO:0000315"/>
    <property type="project" value="MGI"/>
</dbReference>
<dbReference type="GO" id="GO:0006397">
    <property type="term" value="P:mRNA processing"/>
    <property type="evidence" value="ECO:0007669"/>
    <property type="project" value="UniProtKB-KW"/>
</dbReference>
<dbReference type="GO" id="GO:0055001">
    <property type="term" value="P:muscle cell development"/>
    <property type="evidence" value="ECO:0000315"/>
    <property type="project" value="MGI"/>
</dbReference>
<dbReference type="GO" id="GO:0010468">
    <property type="term" value="P:regulation of gene expression"/>
    <property type="evidence" value="ECO:0000315"/>
    <property type="project" value="MGI"/>
</dbReference>
<dbReference type="GO" id="GO:0050684">
    <property type="term" value="P:regulation of mRNA processing"/>
    <property type="evidence" value="ECO:0000315"/>
    <property type="project" value="MGI"/>
</dbReference>
<dbReference type="GO" id="GO:0055010">
    <property type="term" value="P:ventricular cardiac muscle tissue morphogenesis"/>
    <property type="evidence" value="ECO:0000315"/>
    <property type="project" value="MGI"/>
</dbReference>
<dbReference type="FunFam" id="1.25.40.10:FF:001595">
    <property type="entry name" value="Pentatricopeptide repeat-containing protein 2, mitochondrial"/>
    <property type="match status" value="1"/>
</dbReference>
<dbReference type="Gene3D" id="1.25.40.10">
    <property type="entry name" value="Tetratricopeptide repeat domain"/>
    <property type="match status" value="1"/>
</dbReference>
<dbReference type="InterPro" id="IPR034913">
    <property type="entry name" value="mS27/PTCD2"/>
</dbReference>
<dbReference type="InterPro" id="IPR002885">
    <property type="entry name" value="Pentatricopeptide_rpt"/>
</dbReference>
<dbReference type="InterPro" id="IPR034629">
    <property type="entry name" value="PTCD2"/>
</dbReference>
<dbReference type="InterPro" id="IPR011990">
    <property type="entry name" value="TPR-like_helical_dom_sf"/>
</dbReference>
<dbReference type="NCBIfam" id="TIGR00756">
    <property type="entry name" value="PPR"/>
    <property type="match status" value="1"/>
</dbReference>
<dbReference type="PANTHER" id="PTHR14700">
    <property type="entry name" value="PENTATRICOPEPTIDE REPEAT-CONTAINING PROTEIN 2, MITOCHONDRIAL"/>
    <property type="match status" value="1"/>
</dbReference>
<dbReference type="PANTHER" id="PTHR14700:SF0">
    <property type="entry name" value="PENTATRICOPEPTIDE REPEAT-CONTAINING PROTEIN 2, MITOCHONDRIAL"/>
    <property type="match status" value="1"/>
</dbReference>
<dbReference type="Pfam" id="PF10037">
    <property type="entry name" value="MRP-S27"/>
    <property type="match status" value="1"/>
</dbReference>
<dbReference type="PROSITE" id="PS51375">
    <property type="entry name" value="PPR"/>
    <property type="match status" value="1"/>
</dbReference>
<gene>
    <name type="primary">Ptcd2</name>
</gene>
<reference key="1">
    <citation type="journal article" date="2005" name="Science">
        <title>The transcriptional landscape of the mammalian genome.</title>
        <authorList>
            <person name="Carninci P."/>
            <person name="Kasukawa T."/>
            <person name="Katayama S."/>
            <person name="Gough J."/>
            <person name="Frith M.C."/>
            <person name="Maeda N."/>
            <person name="Oyama R."/>
            <person name="Ravasi T."/>
            <person name="Lenhard B."/>
            <person name="Wells C."/>
            <person name="Kodzius R."/>
            <person name="Shimokawa K."/>
            <person name="Bajic V.B."/>
            <person name="Brenner S.E."/>
            <person name="Batalov S."/>
            <person name="Forrest A.R."/>
            <person name="Zavolan M."/>
            <person name="Davis M.J."/>
            <person name="Wilming L.G."/>
            <person name="Aidinis V."/>
            <person name="Allen J.E."/>
            <person name="Ambesi-Impiombato A."/>
            <person name="Apweiler R."/>
            <person name="Aturaliya R.N."/>
            <person name="Bailey T.L."/>
            <person name="Bansal M."/>
            <person name="Baxter L."/>
            <person name="Beisel K.W."/>
            <person name="Bersano T."/>
            <person name="Bono H."/>
            <person name="Chalk A.M."/>
            <person name="Chiu K.P."/>
            <person name="Choudhary V."/>
            <person name="Christoffels A."/>
            <person name="Clutterbuck D.R."/>
            <person name="Crowe M.L."/>
            <person name="Dalla E."/>
            <person name="Dalrymple B.P."/>
            <person name="de Bono B."/>
            <person name="Della Gatta G."/>
            <person name="di Bernardo D."/>
            <person name="Down T."/>
            <person name="Engstrom P."/>
            <person name="Fagiolini M."/>
            <person name="Faulkner G."/>
            <person name="Fletcher C.F."/>
            <person name="Fukushima T."/>
            <person name="Furuno M."/>
            <person name="Futaki S."/>
            <person name="Gariboldi M."/>
            <person name="Georgii-Hemming P."/>
            <person name="Gingeras T.R."/>
            <person name="Gojobori T."/>
            <person name="Green R.E."/>
            <person name="Gustincich S."/>
            <person name="Harbers M."/>
            <person name="Hayashi Y."/>
            <person name="Hensch T.K."/>
            <person name="Hirokawa N."/>
            <person name="Hill D."/>
            <person name="Huminiecki L."/>
            <person name="Iacono M."/>
            <person name="Ikeo K."/>
            <person name="Iwama A."/>
            <person name="Ishikawa T."/>
            <person name="Jakt M."/>
            <person name="Kanapin A."/>
            <person name="Katoh M."/>
            <person name="Kawasawa Y."/>
            <person name="Kelso J."/>
            <person name="Kitamura H."/>
            <person name="Kitano H."/>
            <person name="Kollias G."/>
            <person name="Krishnan S.P."/>
            <person name="Kruger A."/>
            <person name="Kummerfeld S.K."/>
            <person name="Kurochkin I.V."/>
            <person name="Lareau L.F."/>
            <person name="Lazarevic D."/>
            <person name="Lipovich L."/>
            <person name="Liu J."/>
            <person name="Liuni S."/>
            <person name="McWilliam S."/>
            <person name="Madan Babu M."/>
            <person name="Madera M."/>
            <person name="Marchionni L."/>
            <person name="Matsuda H."/>
            <person name="Matsuzawa S."/>
            <person name="Miki H."/>
            <person name="Mignone F."/>
            <person name="Miyake S."/>
            <person name="Morris K."/>
            <person name="Mottagui-Tabar S."/>
            <person name="Mulder N."/>
            <person name="Nakano N."/>
            <person name="Nakauchi H."/>
            <person name="Ng P."/>
            <person name="Nilsson R."/>
            <person name="Nishiguchi S."/>
            <person name="Nishikawa S."/>
            <person name="Nori F."/>
            <person name="Ohara O."/>
            <person name="Okazaki Y."/>
            <person name="Orlando V."/>
            <person name="Pang K.C."/>
            <person name="Pavan W.J."/>
            <person name="Pavesi G."/>
            <person name="Pesole G."/>
            <person name="Petrovsky N."/>
            <person name="Piazza S."/>
            <person name="Reed J."/>
            <person name="Reid J.F."/>
            <person name="Ring B.Z."/>
            <person name="Ringwald M."/>
            <person name="Rost B."/>
            <person name="Ruan Y."/>
            <person name="Salzberg S.L."/>
            <person name="Sandelin A."/>
            <person name="Schneider C."/>
            <person name="Schoenbach C."/>
            <person name="Sekiguchi K."/>
            <person name="Semple C.A."/>
            <person name="Seno S."/>
            <person name="Sessa L."/>
            <person name="Sheng Y."/>
            <person name="Shibata Y."/>
            <person name="Shimada H."/>
            <person name="Shimada K."/>
            <person name="Silva D."/>
            <person name="Sinclair B."/>
            <person name="Sperling S."/>
            <person name="Stupka E."/>
            <person name="Sugiura K."/>
            <person name="Sultana R."/>
            <person name="Takenaka Y."/>
            <person name="Taki K."/>
            <person name="Tammoja K."/>
            <person name="Tan S.L."/>
            <person name="Tang S."/>
            <person name="Taylor M.S."/>
            <person name="Tegner J."/>
            <person name="Teichmann S.A."/>
            <person name="Ueda H.R."/>
            <person name="van Nimwegen E."/>
            <person name="Verardo R."/>
            <person name="Wei C.L."/>
            <person name="Yagi K."/>
            <person name="Yamanishi H."/>
            <person name="Zabarovsky E."/>
            <person name="Zhu S."/>
            <person name="Zimmer A."/>
            <person name="Hide W."/>
            <person name="Bult C."/>
            <person name="Grimmond S.M."/>
            <person name="Teasdale R.D."/>
            <person name="Liu E.T."/>
            <person name="Brusic V."/>
            <person name="Quackenbush J."/>
            <person name="Wahlestedt C."/>
            <person name="Mattick J.S."/>
            <person name="Hume D.A."/>
            <person name="Kai C."/>
            <person name="Sasaki D."/>
            <person name="Tomaru Y."/>
            <person name="Fukuda S."/>
            <person name="Kanamori-Katayama M."/>
            <person name="Suzuki M."/>
            <person name="Aoki J."/>
            <person name="Arakawa T."/>
            <person name="Iida J."/>
            <person name="Imamura K."/>
            <person name="Itoh M."/>
            <person name="Kato T."/>
            <person name="Kawaji H."/>
            <person name="Kawagashira N."/>
            <person name="Kawashima T."/>
            <person name="Kojima M."/>
            <person name="Kondo S."/>
            <person name="Konno H."/>
            <person name="Nakano K."/>
            <person name="Ninomiya N."/>
            <person name="Nishio T."/>
            <person name="Okada M."/>
            <person name="Plessy C."/>
            <person name="Shibata K."/>
            <person name="Shiraki T."/>
            <person name="Suzuki S."/>
            <person name="Tagami M."/>
            <person name="Waki K."/>
            <person name="Watahiki A."/>
            <person name="Okamura-Oho Y."/>
            <person name="Suzuki H."/>
            <person name="Kawai J."/>
            <person name="Hayashizaki Y."/>
        </authorList>
    </citation>
    <scope>NUCLEOTIDE SEQUENCE [LARGE SCALE MRNA]</scope>
    <source>
        <strain>C57BL/6J</strain>
    </source>
</reference>
<reference key="2">
    <citation type="journal article" date="2004" name="Genome Res.">
        <title>The status, quality, and expansion of the NIH full-length cDNA project: the Mammalian Gene Collection (MGC).</title>
        <authorList>
            <consortium name="The MGC Project Team"/>
        </authorList>
    </citation>
    <scope>NUCLEOTIDE SEQUENCE [LARGE SCALE MRNA]</scope>
    <source>
        <strain>Czech II</strain>
        <strain>NMRI</strain>
        <tissue>Mammary tumor</tissue>
    </source>
</reference>
<reference key="3">
    <citation type="journal article" date="2008" name="Biochem. J.">
        <title>Disruption of a mitochondrial RNA-binding protein gene results in decreased cytochrome b expression and a marked reduction in ubiquinol-cytochrome c reductase activity in mouse heart mitochondria.</title>
        <authorList>
            <person name="Xu F."/>
            <person name="Ackerley C."/>
            <person name="Maj M.C."/>
            <person name="Addis J.B."/>
            <person name="Levandovskiy V."/>
            <person name="Lee J."/>
            <person name="Mackay N."/>
            <person name="Cameron J.M."/>
            <person name="Robinson B.H."/>
        </authorList>
    </citation>
    <scope>SUBCELLULAR LOCATION</scope>
    <scope>DISRUPTION PHENOTYPE</scope>
    <scope>FUNCTION</scope>
    <scope>TISSUE SPECIFICITY</scope>
</reference>
<reference key="4">
    <citation type="journal article" date="2010" name="Cell">
        <title>A tissue-specific atlas of mouse protein phosphorylation and expression.</title>
        <authorList>
            <person name="Huttlin E.L."/>
            <person name="Jedrychowski M.P."/>
            <person name="Elias J.E."/>
            <person name="Goswami T."/>
            <person name="Rad R."/>
            <person name="Beausoleil S.A."/>
            <person name="Villen J."/>
            <person name="Haas W."/>
            <person name="Sowa M.E."/>
            <person name="Gygi S.P."/>
        </authorList>
    </citation>
    <scope>IDENTIFICATION BY MASS SPECTROMETRY [LARGE SCALE ANALYSIS]</scope>
    <source>
        <tissue>Heart</tissue>
        <tissue>Kidney</tissue>
    </source>
</reference>
<protein>
    <recommendedName>
        <fullName>Pentatricopeptide repeat-containing protein 2, mitochondrial</fullName>
    </recommendedName>
</protein>